<keyword id="KW-1003">Cell membrane</keyword>
<keyword id="KW-0449">Lipoprotein</keyword>
<keyword id="KW-0472">Membrane</keyword>
<keyword id="KW-0588">Pheromone</keyword>
<keyword id="KW-0636">Prenylation</keyword>
<proteinExistence type="evidence at protein level"/>
<accession>P20466</accession>
<accession>Q02087</accession>
<evidence type="ECO:0000269" key="1">
    <source ref="2"/>
</evidence>
<evidence type="ECO:0000305" key="2"/>
<sequence>MVAYPEISWTRNGCTVAKYPEISWTRNGCTVSKYPEISWTRNGCTVA</sequence>
<gene>
    <name type="primary">RHA3</name>
</gene>
<protein>
    <recommendedName>
        <fullName>Rhodotorucin-A peptides type 3</fullName>
    </recommendedName>
    <component>
        <recommendedName>
            <fullName>Rhodotorucin-A</fullName>
        </recommendedName>
        <alternativeName>
            <fullName>Rhodotorucine-A</fullName>
        </alternativeName>
    </component>
</protein>
<dbReference type="EMBL" id="M28123">
    <property type="protein sequence ID" value="AAA77662.1"/>
    <property type="molecule type" value="Genomic_DNA"/>
</dbReference>
<dbReference type="PIR" id="C32824">
    <property type="entry name" value="C32824"/>
</dbReference>
<dbReference type="GO" id="GO:0005886">
    <property type="term" value="C:plasma membrane"/>
    <property type="evidence" value="ECO:0007669"/>
    <property type="project" value="UniProtKB-SubCell"/>
</dbReference>
<dbReference type="GO" id="GO:0005186">
    <property type="term" value="F:pheromone activity"/>
    <property type="evidence" value="ECO:0007669"/>
    <property type="project" value="UniProtKB-KW"/>
</dbReference>
<feature type="propeptide" id="PRO_0000239419">
    <location>
        <begin position="1"/>
        <end position="3"/>
    </location>
</feature>
<feature type="peptide" id="PRO_0000022238" description="Rhodotorucin-A">
    <location>
        <begin position="4"/>
        <end position="14"/>
    </location>
</feature>
<feature type="propeptide" id="PRO_0000239420">
    <location>
        <begin position="15"/>
        <end position="18"/>
    </location>
</feature>
<feature type="peptide" id="PRO_0000022239" description="Rhodotorucin-A">
    <location>
        <begin position="19"/>
        <end position="29"/>
    </location>
</feature>
<feature type="propeptide" id="PRO_0000239421">
    <location>
        <begin position="30"/>
        <end position="33"/>
    </location>
</feature>
<feature type="peptide" id="PRO_0000022240" description="Rhodotorucin-A">
    <location>
        <begin position="34"/>
        <end position="44"/>
    </location>
</feature>
<feature type="propeptide" id="PRO_0000239422">
    <location>
        <begin position="45"/>
        <end position="47"/>
    </location>
</feature>
<feature type="site" description="Not methylated">
    <location>
        <position position="14"/>
    </location>
</feature>
<feature type="site" description="Not methylated">
    <location>
        <position position="29"/>
    </location>
</feature>
<feature type="site" description="Not methylated">
    <location>
        <position position="44"/>
    </location>
</feature>
<feature type="lipid moiety-binding region" description="S-farnesyl cysteine" evidence="1">
    <location>
        <position position="14"/>
    </location>
</feature>
<feature type="lipid moiety-binding region" description="S-farnesyl cysteine" evidence="1">
    <location>
        <position position="29"/>
    </location>
</feature>
<feature type="lipid moiety-binding region" description="S-farnesyl cysteine" evidence="1">
    <location>
        <position position="44"/>
    </location>
</feature>
<organism>
    <name type="scientific">Rhodotorula toruloides</name>
    <name type="common">Yeast</name>
    <name type="synonym">Rhodosporidium toruloides</name>
    <dbReference type="NCBI Taxonomy" id="5286"/>
    <lineage>
        <taxon>Eukaryota</taxon>
        <taxon>Fungi</taxon>
        <taxon>Dikarya</taxon>
        <taxon>Basidiomycota</taxon>
        <taxon>Pucciniomycotina</taxon>
        <taxon>Microbotryomycetes</taxon>
        <taxon>Sporidiobolales</taxon>
        <taxon>Sporidiobolaceae</taxon>
        <taxon>Rhodotorula</taxon>
    </lineage>
</organism>
<reference key="1">
    <citation type="journal article" date="1989" name="Mol. Cell. Biol.">
        <title>Multiple genes coding for precursors of rhodotorucine A, a farnesyl peptide mating pheromone of the basidiomycetous yeast Rhodosporidium toruloides.</title>
        <authorList>
            <person name="Akada R."/>
            <person name="Minomi K."/>
            <person name="Kai J."/>
            <person name="Yamashita I."/>
            <person name="Miyakawa T."/>
            <person name="Fukui S."/>
        </authorList>
    </citation>
    <scope>NUCLEOTIDE SEQUENCE [GENOMIC DNA]</scope>
    <source>
        <strain>IFO 0559-M919</strain>
    </source>
</reference>
<reference key="2">
    <citation type="journal article" date="1978" name="Biochem. Biophys. Res. Commun.">
        <title>Structure of rhodotorucine A, a novel lipopeptide, inducing mating tube formation in Rhodosporidium toruloides.</title>
        <authorList>
            <person name="Kamiya Y."/>
            <person name="Sakurai A."/>
            <person name="Tamura S."/>
            <person name="Takahashi N."/>
            <person name="Abe K."/>
            <person name="Tsuchiya E."/>
            <person name="Fukui S."/>
            <person name="Kitada C."/>
            <person name="Fujino M."/>
        </authorList>
    </citation>
    <scope>ISOPRENYLATION AT CYS-14; CYS-29 AND CYS-44</scope>
</reference>
<name>RHA3_RHOTO</name>
<comment type="function">
    <text>Rhodotorucin-A is a mating pheromone in cells of mating type A of Rhodosporidium toruloides.</text>
</comment>
<comment type="subcellular location">
    <subcellularLocation>
        <location evidence="2">Cell membrane</location>
        <topology evidence="2">Lipid-anchor</topology>
        <orientation evidence="2">Cytoplasmic side</orientation>
    </subcellularLocation>
</comment>